<evidence type="ECO:0000255" key="1">
    <source>
        <dbReference type="HAMAP-Rule" id="MF_00502"/>
    </source>
</evidence>
<evidence type="ECO:0000305" key="2"/>
<gene>
    <name evidence="1" type="primary">rpmE2</name>
    <name type="ordered locus">Pnuc_1309</name>
</gene>
<keyword id="KW-1185">Reference proteome</keyword>
<keyword id="KW-0687">Ribonucleoprotein</keyword>
<keyword id="KW-0689">Ribosomal protein</keyword>
<name>RL31B_POLAQ</name>
<feature type="chain" id="PRO_1000081455" description="Large ribosomal subunit protein bL31B">
    <location>
        <begin position="1"/>
        <end position="115"/>
    </location>
</feature>
<protein>
    <recommendedName>
        <fullName evidence="1">Large ribosomal subunit protein bL31B</fullName>
    </recommendedName>
    <alternativeName>
        <fullName evidence="2">50S ribosomal protein L31 type B</fullName>
    </alternativeName>
</protein>
<organism>
    <name type="scientific">Polynucleobacter asymbioticus (strain DSM 18221 / CIP 109841 / QLW-P1DMWA-1)</name>
    <name type="common">Polynucleobacter necessarius subsp. asymbioticus</name>
    <dbReference type="NCBI Taxonomy" id="312153"/>
    <lineage>
        <taxon>Bacteria</taxon>
        <taxon>Pseudomonadati</taxon>
        <taxon>Pseudomonadota</taxon>
        <taxon>Betaproteobacteria</taxon>
        <taxon>Burkholderiales</taxon>
        <taxon>Burkholderiaceae</taxon>
        <taxon>Polynucleobacter</taxon>
    </lineage>
</organism>
<dbReference type="EMBL" id="CP000655">
    <property type="protein sequence ID" value="ABP34523.1"/>
    <property type="molecule type" value="Genomic_DNA"/>
</dbReference>
<dbReference type="RefSeq" id="WP_011903148.1">
    <property type="nucleotide sequence ID" value="NC_009379.1"/>
</dbReference>
<dbReference type="SMR" id="A4SYF9"/>
<dbReference type="GeneID" id="31481698"/>
<dbReference type="KEGG" id="pnu:Pnuc_1309"/>
<dbReference type="eggNOG" id="COG0254">
    <property type="taxonomic scope" value="Bacteria"/>
</dbReference>
<dbReference type="HOGENOM" id="CLU_114306_2_1_4"/>
<dbReference type="Proteomes" id="UP000000231">
    <property type="component" value="Chromosome"/>
</dbReference>
<dbReference type="GO" id="GO:1990904">
    <property type="term" value="C:ribonucleoprotein complex"/>
    <property type="evidence" value="ECO:0007669"/>
    <property type="project" value="UniProtKB-KW"/>
</dbReference>
<dbReference type="GO" id="GO:0005840">
    <property type="term" value="C:ribosome"/>
    <property type="evidence" value="ECO:0007669"/>
    <property type="project" value="UniProtKB-KW"/>
</dbReference>
<dbReference type="GO" id="GO:0003735">
    <property type="term" value="F:structural constituent of ribosome"/>
    <property type="evidence" value="ECO:0007669"/>
    <property type="project" value="InterPro"/>
</dbReference>
<dbReference type="GO" id="GO:0006412">
    <property type="term" value="P:translation"/>
    <property type="evidence" value="ECO:0007669"/>
    <property type="project" value="UniProtKB-UniRule"/>
</dbReference>
<dbReference type="Gene3D" id="4.10.830.30">
    <property type="entry name" value="Ribosomal protein L31"/>
    <property type="match status" value="1"/>
</dbReference>
<dbReference type="HAMAP" id="MF_00502">
    <property type="entry name" value="Ribosomal_bL31_2"/>
    <property type="match status" value="1"/>
</dbReference>
<dbReference type="InterPro" id="IPR034704">
    <property type="entry name" value="Ribosomal_bL28/bL31-like_sf"/>
</dbReference>
<dbReference type="InterPro" id="IPR002150">
    <property type="entry name" value="Ribosomal_bL31"/>
</dbReference>
<dbReference type="InterPro" id="IPR027493">
    <property type="entry name" value="Ribosomal_bL31_B"/>
</dbReference>
<dbReference type="InterPro" id="IPR042105">
    <property type="entry name" value="Ribosomal_bL31_sf"/>
</dbReference>
<dbReference type="NCBIfam" id="TIGR00105">
    <property type="entry name" value="L31"/>
    <property type="match status" value="1"/>
</dbReference>
<dbReference type="NCBIfam" id="NF002462">
    <property type="entry name" value="PRK01678.1"/>
    <property type="match status" value="1"/>
</dbReference>
<dbReference type="PANTHER" id="PTHR33280">
    <property type="entry name" value="50S RIBOSOMAL PROTEIN L31, CHLOROPLASTIC"/>
    <property type="match status" value="1"/>
</dbReference>
<dbReference type="PANTHER" id="PTHR33280:SF1">
    <property type="entry name" value="LARGE RIBOSOMAL SUBUNIT PROTEIN BL31C"/>
    <property type="match status" value="1"/>
</dbReference>
<dbReference type="Pfam" id="PF01197">
    <property type="entry name" value="Ribosomal_L31"/>
    <property type="match status" value="1"/>
</dbReference>
<dbReference type="PRINTS" id="PR01249">
    <property type="entry name" value="RIBOSOMALL31"/>
</dbReference>
<dbReference type="SUPFAM" id="SSF143800">
    <property type="entry name" value="L28p-like"/>
    <property type="match status" value="1"/>
</dbReference>
<dbReference type="PROSITE" id="PS01143">
    <property type="entry name" value="RIBOSOMAL_L31"/>
    <property type="match status" value="1"/>
</dbReference>
<accession>A4SYF9</accession>
<proteinExistence type="inferred from homology"/>
<sequence>MKPGIHPEYREIVFVDVSNNFSFKTRSTMSTRETIKWEDGNEYPLAKIETSSESHPFYTGTQKIMDTAGRVEKFRQKFGTKAVAKASGDGAAKTAEKKAAAAEAKAAEKPAKKKA</sequence>
<comment type="subunit">
    <text evidence="1">Part of the 50S ribosomal subunit.</text>
</comment>
<comment type="similarity">
    <text evidence="1">Belongs to the bacterial ribosomal protein bL31 family. Type B subfamily.</text>
</comment>
<reference key="1">
    <citation type="journal article" date="2012" name="Stand. Genomic Sci.">
        <title>Complete genome sequence of Polynucleobacter necessarius subsp. asymbioticus type strain (QLW-P1DMWA-1(T)).</title>
        <authorList>
            <person name="Meincke L."/>
            <person name="Copeland A."/>
            <person name="Lapidus A."/>
            <person name="Lucas S."/>
            <person name="Berry K.W."/>
            <person name="Del Rio T.G."/>
            <person name="Hammon N."/>
            <person name="Dalin E."/>
            <person name="Tice H."/>
            <person name="Pitluck S."/>
            <person name="Richardson P."/>
            <person name="Bruce D."/>
            <person name="Goodwin L."/>
            <person name="Han C."/>
            <person name="Tapia R."/>
            <person name="Detter J.C."/>
            <person name="Schmutz J."/>
            <person name="Brettin T."/>
            <person name="Larimer F."/>
            <person name="Land M."/>
            <person name="Hauser L."/>
            <person name="Kyrpides N.C."/>
            <person name="Ivanova N."/>
            <person name="Goker M."/>
            <person name="Woyke T."/>
            <person name="Wu Q.L."/>
            <person name="Pockl M."/>
            <person name="Hahn M.W."/>
            <person name="Klenk H.P."/>
        </authorList>
    </citation>
    <scope>NUCLEOTIDE SEQUENCE [LARGE SCALE GENOMIC DNA]</scope>
    <source>
        <strain>DSM 18221 / CIP 109841 / QLW-P1DMWA-1</strain>
    </source>
</reference>